<gene>
    <name evidence="1" type="primary">murD</name>
    <name type="ordered locus">Bpro_1073</name>
</gene>
<comment type="function">
    <text evidence="1">Cell wall formation. Catalyzes the addition of glutamate to the nucleotide precursor UDP-N-acetylmuramoyl-L-alanine (UMA).</text>
</comment>
<comment type="catalytic activity">
    <reaction evidence="1">
        <text>UDP-N-acetyl-alpha-D-muramoyl-L-alanine + D-glutamate + ATP = UDP-N-acetyl-alpha-D-muramoyl-L-alanyl-D-glutamate + ADP + phosphate + H(+)</text>
        <dbReference type="Rhea" id="RHEA:16429"/>
        <dbReference type="ChEBI" id="CHEBI:15378"/>
        <dbReference type="ChEBI" id="CHEBI:29986"/>
        <dbReference type="ChEBI" id="CHEBI:30616"/>
        <dbReference type="ChEBI" id="CHEBI:43474"/>
        <dbReference type="ChEBI" id="CHEBI:83898"/>
        <dbReference type="ChEBI" id="CHEBI:83900"/>
        <dbReference type="ChEBI" id="CHEBI:456216"/>
        <dbReference type="EC" id="6.3.2.9"/>
    </reaction>
</comment>
<comment type="pathway">
    <text evidence="1">Cell wall biogenesis; peptidoglycan biosynthesis.</text>
</comment>
<comment type="subcellular location">
    <subcellularLocation>
        <location evidence="1">Cytoplasm</location>
    </subcellularLocation>
</comment>
<comment type="similarity">
    <text evidence="1">Belongs to the MurCDEF family.</text>
</comment>
<accession>Q12EL7</accession>
<dbReference type="EC" id="6.3.2.9" evidence="1"/>
<dbReference type="EMBL" id="CP000316">
    <property type="protein sequence ID" value="ABE43025.1"/>
    <property type="molecule type" value="Genomic_DNA"/>
</dbReference>
<dbReference type="RefSeq" id="WP_011482027.1">
    <property type="nucleotide sequence ID" value="NC_007948.1"/>
</dbReference>
<dbReference type="SMR" id="Q12EL7"/>
<dbReference type="STRING" id="296591.Bpro_1073"/>
<dbReference type="KEGG" id="pol:Bpro_1073"/>
<dbReference type="eggNOG" id="COG0771">
    <property type="taxonomic scope" value="Bacteria"/>
</dbReference>
<dbReference type="HOGENOM" id="CLU_032540_1_1_4"/>
<dbReference type="OrthoDB" id="9809796at2"/>
<dbReference type="UniPathway" id="UPA00219"/>
<dbReference type="Proteomes" id="UP000001983">
    <property type="component" value="Chromosome"/>
</dbReference>
<dbReference type="GO" id="GO:0005737">
    <property type="term" value="C:cytoplasm"/>
    <property type="evidence" value="ECO:0007669"/>
    <property type="project" value="UniProtKB-SubCell"/>
</dbReference>
<dbReference type="GO" id="GO:0005524">
    <property type="term" value="F:ATP binding"/>
    <property type="evidence" value="ECO:0007669"/>
    <property type="project" value="UniProtKB-UniRule"/>
</dbReference>
<dbReference type="GO" id="GO:0004326">
    <property type="term" value="F:tetrahydrofolylpolyglutamate synthase activity"/>
    <property type="evidence" value="ECO:0007669"/>
    <property type="project" value="InterPro"/>
</dbReference>
<dbReference type="GO" id="GO:0008764">
    <property type="term" value="F:UDP-N-acetylmuramoylalanine-D-glutamate ligase activity"/>
    <property type="evidence" value="ECO:0007669"/>
    <property type="project" value="UniProtKB-UniRule"/>
</dbReference>
<dbReference type="GO" id="GO:0051301">
    <property type="term" value="P:cell division"/>
    <property type="evidence" value="ECO:0007669"/>
    <property type="project" value="UniProtKB-KW"/>
</dbReference>
<dbReference type="GO" id="GO:0071555">
    <property type="term" value="P:cell wall organization"/>
    <property type="evidence" value="ECO:0007669"/>
    <property type="project" value="UniProtKB-KW"/>
</dbReference>
<dbReference type="GO" id="GO:0009252">
    <property type="term" value="P:peptidoglycan biosynthetic process"/>
    <property type="evidence" value="ECO:0007669"/>
    <property type="project" value="UniProtKB-UniRule"/>
</dbReference>
<dbReference type="GO" id="GO:0008360">
    <property type="term" value="P:regulation of cell shape"/>
    <property type="evidence" value="ECO:0007669"/>
    <property type="project" value="UniProtKB-KW"/>
</dbReference>
<dbReference type="Gene3D" id="3.90.190.20">
    <property type="entry name" value="Mur ligase, C-terminal domain"/>
    <property type="match status" value="1"/>
</dbReference>
<dbReference type="Gene3D" id="3.40.1190.10">
    <property type="entry name" value="Mur-like, catalytic domain"/>
    <property type="match status" value="1"/>
</dbReference>
<dbReference type="Gene3D" id="3.40.50.720">
    <property type="entry name" value="NAD(P)-binding Rossmann-like Domain"/>
    <property type="match status" value="1"/>
</dbReference>
<dbReference type="HAMAP" id="MF_00639">
    <property type="entry name" value="MurD"/>
    <property type="match status" value="1"/>
</dbReference>
<dbReference type="InterPro" id="IPR018109">
    <property type="entry name" value="Folylpolyglutamate_synth_CS"/>
</dbReference>
<dbReference type="InterPro" id="IPR036565">
    <property type="entry name" value="Mur-like_cat_sf"/>
</dbReference>
<dbReference type="InterPro" id="IPR004101">
    <property type="entry name" value="Mur_ligase_C"/>
</dbReference>
<dbReference type="InterPro" id="IPR036615">
    <property type="entry name" value="Mur_ligase_C_dom_sf"/>
</dbReference>
<dbReference type="InterPro" id="IPR013221">
    <property type="entry name" value="Mur_ligase_cen"/>
</dbReference>
<dbReference type="InterPro" id="IPR005762">
    <property type="entry name" value="MurD"/>
</dbReference>
<dbReference type="NCBIfam" id="TIGR01087">
    <property type="entry name" value="murD"/>
    <property type="match status" value="1"/>
</dbReference>
<dbReference type="PANTHER" id="PTHR43692">
    <property type="entry name" value="UDP-N-ACETYLMURAMOYLALANINE--D-GLUTAMATE LIGASE"/>
    <property type="match status" value="1"/>
</dbReference>
<dbReference type="PANTHER" id="PTHR43692:SF1">
    <property type="entry name" value="UDP-N-ACETYLMURAMOYLALANINE--D-GLUTAMATE LIGASE"/>
    <property type="match status" value="1"/>
</dbReference>
<dbReference type="Pfam" id="PF02875">
    <property type="entry name" value="Mur_ligase_C"/>
    <property type="match status" value="1"/>
</dbReference>
<dbReference type="Pfam" id="PF08245">
    <property type="entry name" value="Mur_ligase_M"/>
    <property type="match status" value="1"/>
</dbReference>
<dbReference type="Pfam" id="PF21799">
    <property type="entry name" value="MurD-like_N"/>
    <property type="match status" value="1"/>
</dbReference>
<dbReference type="SUPFAM" id="SSF51984">
    <property type="entry name" value="MurCD N-terminal domain"/>
    <property type="match status" value="1"/>
</dbReference>
<dbReference type="SUPFAM" id="SSF53623">
    <property type="entry name" value="MurD-like peptide ligases, catalytic domain"/>
    <property type="match status" value="1"/>
</dbReference>
<dbReference type="SUPFAM" id="SSF53244">
    <property type="entry name" value="MurD-like peptide ligases, peptide-binding domain"/>
    <property type="match status" value="1"/>
</dbReference>
<reference key="1">
    <citation type="journal article" date="2008" name="Appl. Environ. Microbiol.">
        <title>The genome of Polaromonas sp. strain JS666: insights into the evolution of a hydrocarbon- and xenobiotic-degrading bacterium, and features of relevance to biotechnology.</title>
        <authorList>
            <person name="Mattes T.E."/>
            <person name="Alexander A.K."/>
            <person name="Richardson P.M."/>
            <person name="Munk A.C."/>
            <person name="Han C.S."/>
            <person name="Stothard P."/>
            <person name="Coleman N.V."/>
        </authorList>
    </citation>
    <scope>NUCLEOTIDE SEQUENCE [LARGE SCALE GENOMIC DNA]</scope>
    <source>
        <strain>JS666 / ATCC BAA-500</strain>
    </source>
</reference>
<name>MURD_POLSJ</name>
<keyword id="KW-0067">ATP-binding</keyword>
<keyword id="KW-0131">Cell cycle</keyword>
<keyword id="KW-0132">Cell division</keyword>
<keyword id="KW-0133">Cell shape</keyword>
<keyword id="KW-0961">Cell wall biogenesis/degradation</keyword>
<keyword id="KW-0963">Cytoplasm</keyword>
<keyword id="KW-0436">Ligase</keyword>
<keyword id="KW-0547">Nucleotide-binding</keyword>
<keyword id="KW-0573">Peptidoglycan synthesis</keyword>
<keyword id="KW-1185">Reference proteome</keyword>
<evidence type="ECO:0000255" key="1">
    <source>
        <dbReference type="HAMAP-Rule" id="MF_00639"/>
    </source>
</evidence>
<evidence type="ECO:0000256" key="2">
    <source>
        <dbReference type="SAM" id="MobiDB-lite"/>
    </source>
</evidence>
<sequence>MRHLQDQTVLILGLGASGLAMARWWVRHGASVTVADTREAPALLATLRQELPAVKFVSGAFTPDLVQGSAVRAVYRSPGLAPAVIAPVVDAARAMGLPVGGELDLFSRALADLREVSATEVVKDHLVPPESPLSDASDISDASDATDAVDSLEGEAALAADASGDIEEMSASDVVEGAPVSEDAGEDAALPALLAPAPAEQAAGYRPVVLAITGTNGKTTVTSLVGQLVQRAGKTVAVAGNIGPTLLDTLSAHLDADTLPQVWVLELSSFQLADAQDFEPTAAVVLNVTQDHLDWHGDMDAYVAAKARIFGRSTFMLLNRDDPRVMEMLPTPVKVRLRPPQVRPHSTFGAGEPQRPGDYGIETVNGMAWLVRAAQADETIKRRKGEEVELHIQRLMPLDALRIRGRHNATNALAALGLAVAAGCSLAPMLHGLREYRGEPHRVESIAVVNDVEYFDDSKGTNVGATAAALAGLGAERKLVVILGGEGKGQDFSPLAEPVSHHARAVVLIGKDAPLIRSALQASQVALLDAASMQEAVSLAAAQAHTGDAVLMSPACASFDMFDNYEHRAQVFCDAVQALAQEQGVVL</sequence>
<proteinExistence type="inferred from homology"/>
<protein>
    <recommendedName>
        <fullName evidence="1">UDP-N-acetylmuramoylalanine--D-glutamate ligase</fullName>
        <ecNumber evidence="1">6.3.2.9</ecNumber>
    </recommendedName>
    <alternativeName>
        <fullName evidence="1">D-glutamic acid-adding enzyme</fullName>
    </alternativeName>
    <alternativeName>
        <fullName evidence="1">UDP-N-acetylmuramoyl-L-alanyl-D-glutamate synthetase</fullName>
    </alternativeName>
</protein>
<feature type="chain" id="PRO_0000257213" description="UDP-N-acetylmuramoylalanine--D-glutamate ligase">
    <location>
        <begin position="1"/>
        <end position="587"/>
    </location>
</feature>
<feature type="region of interest" description="Disordered" evidence="2">
    <location>
        <begin position="124"/>
        <end position="147"/>
    </location>
</feature>
<feature type="compositionally biased region" description="Low complexity" evidence="2">
    <location>
        <begin position="132"/>
        <end position="147"/>
    </location>
</feature>
<feature type="binding site" evidence="1">
    <location>
        <begin position="214"/>
        <end position="220"/>
    </location>
    <ligand>
        <name>ATP</name>
        <dbReference type="ChEBI" id="CHEBI:30616"/>
    </ligand>
</feature>
<organism>
    <name type="scientific">Polaromonas sp. (strain JS666 / ATCC BAA-500)</name>
    <dbReference type="NCBI Taxonomy" id="296591"/>
    <lineage>
        <taxon>Bacteria</taxon>
        <taxon>Pseudomonadati</taxon>
        <taxon>Pseudomonadota</taxon>
        <taxon>Betaproteobacteria</taxon>
        <taxon>Burkholderiales</taxon>
        <taxon>Comamonadaceae</taxon>
        <taxon>Polaromonas</taxon>
    </lineage>
</organism>